<proteinExistence type="inferred from homology"/>
<gene>
    <name evidence="1" type="primary">potA</name>
    <name type="ordered locus">M6_Spy0824</name>
</gene>
<reference key="1">
    <citation type="journal article" date="2004" name="J. Infect. Dis.">
        <title>Progress toward characterization of the group A Streptococcus metagenome: complete genome sequence of a macrolide-resistant serotype M6 strain.</title>
        <authorList>
            <person name="Banks D.J."/>
            <person name="Porcella S.F."/>
            <person name="Barbian K.D."/>
            <person name="Beres S.B."/>
            <person name="Philips L.E."/>
            <person name="Voyich J.M."/>
            <person name="DeLeo F.R."/>
            <person name="Martin J.M."/>
            <person name="Somerville G.A."/>
            <person name="Musser J.M."/>
        </authorList>
    </citation>
    <scope>NUCLEOTIDE SEQUENCE [LARGE SCALE GENOMIC DNA]</scope>
    <source>
        <strain>ATCC BAA-946 / MGAS10394</strain>
    </source>
</reference>
<comment type="function">
    <text evidence="1">Part of the ABC transporter complex PotABCD involved in spermidine/putrescine import. Responsible for energy coupling to the transport system.</text>
</comment>
<comment type="catalytic activity">
    <reaction evidence="1">
        <text>ATP + H2O + polyamine-[polyamine-binding protein]Side 1 = ADP + phosphate + polyamineSide 2 + [polyamine-binding protein]Side 1.</text>
        <dbReference type="EC" id="7.6.2.11"/>
    </reaction>
</comment>
<comment type="subunit">
    <text evidence="1">The complex is composed of two ATP-binding proteins (PotA), two transmembrane proteins (PotB and PotC) and a solute-binding protein (PotD).</text>
</comment>
<comment type="subcellular location">
    <subcellularLocation>
        <location evidence="1">Cell membrane</location>
        <topology evidence="1">Peripheral membrane protein</topology>
    </subcellularLocation>
</comment>
<comment type="similarity">
    <text evidence="1">Belongs to the ABC transporter superfamily. Spermidine/putrescine importer (TC 3.A.1.11.1) family.</text>
</comment>
<feature type="chain" id="PRO_0000286313" description="Spermidine/putrescine import ATP-binding protein PotA">
    <location>
        <begin position="1"/>
        <end position="384"/>
    </location>
</feature>
<feature type="domain" description="ABC transporter" evidence="1">
    <location>
        <begin position="6"/>
        <end position="238"/>
    </location>
</feature>
<feature type="binding site" evidence="1">
    <location>
        <begin position="40"/>
        <end position="47"/>
    </location>
    <ligand>
        <name>ATP</name>
        <dbReference type="ChEBI" id="CHEBI:30616"/>
    </ligand>
</feature>
<protein>
    <recommendedName>
        <fullName evidence="1">Spermidine/putrescine import ATP-binding protein PotA</fullName>
        <ecNumber evidence="1">7.6.2.11</ecNumber>
    </recommendedName>
</protein>
<name>POTA_STRP6</name>
<keyword id="KW-0067">ATP-binding</keyword>
<keyword id="KW-1003">Cell membrane</keyword>
<keyword id="KW-0472">Membrane</keyword>
<keyword id="KW-0547">Nucleotide-binding</keyword>
<keyword id="KW-1278">Translocase</keyword>
<keyword id="KW-0813">Transport</keyword>
<organism>
    <name type="scientific">Streptococcus pyogenes serotype M6 (strain ATCC BAA-946 / MGAS10394)</name>
    <dbReference type="NCBI Taxonomy" id="286636"/>
    <lineage>
        <taxon>Bacteria</taxon>
        <taxon>Bacillati</taxon>
        <taxon>Bacillota</taxon>
        <taxon>Bacilli</taxon>
        <taxon>Lactobacillales</taxon>
        <taxon>Streptococcaceae</taxon>
        <taxon>Streptococcus</taxon>
    </lineage>
</organism>
<evidence type="ECO:0000255" key="1">
    <source>
        <dbReference type="HAMAP-Rule" id="MF_01726"/>
    </source>
</evidence>
<dbReference type="EC" id="7.6.2.11" evidence="1"/>
<dbReference type="EMBL" id="CP000003">
    <property type="protein sequence ID" value="AAT86959.1"/>
    <property type="molecule type" value="Genomic_DNA"/>
</dbReference>
<dbReference type="RefSeq" id="WP_011184488.1">
    <property type="nucleotide sequence ID" value="NC_006086.1"/>
</dbReference>
<dbReference type="SMR" id="Q5XCA4"/>
<dbReference type="KEGG" id="spa:M6_Spy0824"/>
<dbReference type="HOGENOM" id="CLU_000604_1_1_9"/>
<dbReference type="Proteomes" id="UP000001167">
    <property type="component" value="Chromosome"/>
</dbReference>
<dbReference type="GO" id="GO:0043190">
    <property type="term" value="C:ATP-binding cassette (ABC) transporter complex"/>
    <property type="evidence" value="ECO:0007669"/>
    <property type="project" value="InterPro"/>
</dbReference>
<dbReference type="GO" id="GO:0015417">
    <property type="term" value="F:ABC-type polyamine transporter activity"/>
    <property type="evidence" value="ECO:0007669"/>
    <property type="project" value="UniProtKB-EC"/>
</dbReference>
<dbReference type="GO" id="GO:0005524">
    <property type="term" value="F:ATP binding"/>
    <property type="evidence" value="ECO:0007669"/>
    <property type="project" value="UniProtKB-KW"/>
</dbReference>
<dbReference type="GO" id="GO:0016887">
    <property type="term" value="F:ATP hydrolysis activity"/>
    <property type="evidence" value="ECO:0007669"/>
    <property type="project" value="InterPro"/>
</dbReference>
<dbReference type="FunFam" id="3.40.50.300:FF:000042">
    <property type="entry name" value="Maltose/maltodextrin ABC transporter, ATP-binding protein"/>
    <property type="match status" value="1"/>
</dbReference>
<dbReference type="Gene3D" id="2.40.50.100">
    <property type="match status" value="1"/>
</dbReference>
<dbReference type="Gene3D" id="3.40.50.300">
    <property type="entry name" value="P-loop containing nucleotide triphosphate hydrolases"/>
    <property type="match status" value="1"/>
</dbReference>
<dbReference type="InterPro" id="IPR003593">
    <property type="entry name" value="AAA+_ATPase"/>
</dbReference>
<dbReference type="InterPro" id="IPR050093">
    <property type="entry name" value="ABC_SmlMolc_Importer"/>
</dbReference>
<dbReference type="InterPro" id="IPR003439">
    <property type="entry name" value="ABC_transporter-like_ATP-bd"/>
</dbReference>
<dbReference type="InterPro" id="IPR017871">
    <property type="entry name" value="ABC_transporter-like_CS"/>
</dbReference>
<dbReference type="InterPro" id="IPR008995">
    <property type="entry name" value="Mo/tungstate-bd_C_term_dom"/>
</dbReference>
<dbReference type="InterPro" id="IPR027417">
    <property type="entry name" value="P-loop_NTPase"/>
</dbReference>
<dbReference type="InterPro" id="IPR005893">
    <property type="entry name" value="PotA-like"/>
</dbReference>
<dbReference type="InterPro" id="IPR013611">
    <property type="entry name" value="Transp-assoc_OB_typ2"/>
</dbReference>
<dbReference type="NCBIfam" id="TIGR01187">
    <property type="entry name" value="potA"/>
    <property type="match status" value="1"/>
</dbReference>
<dbReference type="PANTHER" id="PTHR42781">
    <property type="entry name" value="SPERMIDINE/PUTRESCINE IMPORT ATP-BINDING PROTEIN POTA"/>
    <property type="match status" value="1"/>
</dbReference>
<dbReference type="PANTHER" id="PTHR42781:SF4">
    <property type="entry name" value="SPERMIDINE_PUTRESCINE IMPORT ATP-BINDING PROTEIN POTA"/>
    <property type="match status" value="1"/>
</dbReference>
<dbReference type="Pfam" id="PF00005">
    <property type="entry name" value="ABC_tran"/>
    <property type="match status" value="1"/>
</dbReference>
<dbReference type="Pfam" id="PF08402">
    <property type="entry name" value="TOBE_2"/>
    <property type="match status" value="1"/>
</dbReference>
<dbReference type="SMART" id="SM00382">
    <property type="entry name" value="AAA"/>
    <property type="match status" value="1"/>
</dbReference>
<dbReference type="SUPFAM" id="SSF50331">
    <property type="entry name" value="MOP-like"/>
    <property type="match status" value="1"/>
</dbReference>
<dbReference type="SUPFAM" id="SSF52540">
    <property type="entry name" value="P-loop containing nucleoside triphosphate hydrolases"/>
    <property type="match status" value="1"/>
</dbReference>
<dbReference type="PROSITE" id="PS00211">
    <property type="entry name" value="ABC_TRANSPORTER_1"/>
    <property type="match status" value="1"/>
</dbReference>
<dbReference type="PROSITE" id="PS50893">
    <property type="entry name" value="ABC_TRANSPORTER_2"/>
    <property type="match status" value="1"/>
</dbReference>
<dbReference type="PROSITE" id="PS51305">
    <property type="entry name" value="POTA"/>
    <property type="match status" value="1"/>
</dbReference>
<sequence length="384" mass="43814">MTKPIITFNNVSKTFEDSGTQVLKNINFDLEEGKFYTLLGASGSGKSTILNIMAGLLDASSGDIYLDGERINDLPINKRDIHTVFQNYALFPHMTVFENVAFALKLKKVDKKEIAKRVKETLKMVQLEGYENRSIQKLSGGQRQRVAIARAIINQPRVVLLDEPLSALDLKLRTEMQYELRELQQRLGITFVFVTHDQEEALAMSDWVFVMNEGEIVQSGTPVDIYDEPINHFVANFIGESNIINGTMIEDYLVSFNGKEFESVDGGMRPNEPVEVVIRPEDLQITLPEEGKLQVKVDTQLFRGVHYEIIAYDELGNEWMIHSTRKAIEGEVIGLDFTPEDLHIMRLNETEEEFDARIEEYVEMDESEDGLINAIEEERNEENL</sequence>
<accession>Q5XCA4</accession>